<accession>Q2RJF9</accession>
<reference key="1">
    <citation type="journal article" date="2008" name="Environ. Microbiol.">
        <title>The complete genome sequence of Moorella thermoacetica (f. Clostridium thermoaceticum).</title>
        <authorList>
            <person name="Pierce E."/>
            <person name="Xie G."/>
            <person name="Barabote R.D."/>
            <person name="Saunders E."/>
            <person name="Han C.S."/>
            <person name="Detter J.C."/>
            <person name="Richardson P."/>
            <person name="Brettin T.S."/>
            <person name="Das A."/>
            <person name="Ljungdahl L.G."/>
            <person name="Ragsdale S.W."/>
        </authorList>
    </citation>
    <scope>NUCLEOTIDE SEQUENCE [LARGE SCALE GENOMIC DNA]</scope>
    <source>
        <strain>ATCC 39073 / JCM 9320</strain>
    </source>
</reference>
<feature type="chain" id="PRO_0000265166" description="RNA-binding protein Hfq">
    <location>
        <begin position="1"/>
        <end position="84"/>
    </location>
</feature>
<feature type="domain" description="Sm" evidence="2">
    <location>
        <begin position="10"/>
        <end position="70"/>
    </location>
</feature>
<protein>
    <recommendedName>
        <fullName evidence="1">RNA-binding protein Hfq</fullName>
    </recommendedName>
</protein>
<dbReference type="EMBL" id="CP000232">
    <property type="protein sequence ID" value="ABC19430.1"/>
    <property type="molecule type" value="Genomic_DNA"/>
</dbReference>
<dbReference type="RefSeq" id="YP_429973.1">
    <property type="nucleotide sequence ID" value="NC_007644.1"/>
</dbReference>
<dbReference type="SMR" id="Q2RJF9"/>
<dbReference type="STRING" id="264732.Moth_1116"/>
<dbReference type="EnsemblBacteria" id="ABC19430">
    <property type="protein sequence ID" value="ABC19430"/>
    <property type="gene ID" value="Moth_1116"/>
</dbReference>
<dbReference type="KEGG" id="mta:Moth_1116"/>
<dbReference type="PATRIC" id="fig|264732.11.peg.1197"/>
<dbReference type="eggNOG" id="COG1923">
    <property type="taxonomic scope" value="Bacteria"/>
</dbReference>
<dbReference type="HOGENOM" id="CLU_113688_0_2_9"/>
<dbReference type="OrthoDB" id="9799751at2"/>
<dbReference type="GO" id="GO:0005829">
    <property type="term" value="C:cytosol"/>
    <property type="evidence" value="ECO:0007669"/>
    <property type="project" value="TreeGrafter"/>
</dbReference>
<dbReference type="GO" id="GO:0003723">
    <property type="term" value="F:RNA binding"/>
    <property type="evidence" value="ECO:0007669"/>
    <property type="project" value="UniProtKB-UniRule"/>
</dbReference>
<dbReference type="GO" id="GO:0006355">
    <property type="term" value="P:regulation of DNA-templated transcription"/>
    <property type="evidence" value="ECO:0007669"/>
    <property type="project" value="InterPro"/>
</dbReference>
<dbReference type="GO" id="GO:0043487">
    <property type="term" value="P:regulation of RNA stability"/>
    <property type="evidence" value="ECO:0007669"/>
    <property type="project" value="TreeGrafter"/>
</dbReference>
<dbReference type="GO" id="GO:0045974">
    <property type="term" value="P:regulation of translation, ncRNA-mediated"/>
    <property type="evidence" value="ECO:0007669"/>
    <property type="project" value="TreeGrafter"/>
</dbReference>
<dbReference type="CDD" id="cd01716">
    <property type="entry name" value="Hfq"/>
    <property type="match status" value="1"/>
</dbReference>
<dbReference type="Gene3D" id="2.30.30.100">
    <property type="match status" value="1"/>
</dbReference>
<dbReference type="HAMAP" id="MF_00436">
    <property type="entry name" value="Hfq"/>
    <property type="match status" value="1"/>
</dbReference>
<dbReference type="InterPro" id="IPR005001">
    <property type="entry name" value="Hfq"/>
</dbReference>
<dbReference type="InterPro" id="IPR010920">
    <property type="entry name" value="LSM_dom_sf"/>
</dbReference>
<dbReference type="InterPro" id="IPR047575">
    <property type="entry name" value="Sm"/>
</dbReference>
<dbReference type="NCBIfam" id="TIGR02383">
    <property type="entry name" value="Hfq"/>
    <property type="match status" value="1"/>
</dbReference>
<dbReference type="NCBIfam" id="NF001602">
    <property type="entry name" value="PRK00395.1"/>
    <property type="match status" value="1"/>
</dbReference>
<dbReference type="PANTHER" id="PTHR34772">
    <property type="entry name" value="RNA-BINDING PROTEIN HFQ"/>
    <property type="match status" value="1"/>
</dbReference>
<dbReference type="PANTHER" id="PTHR34772:SF1">
    <property type="entry name" value="RNA-BINDING PROTEIN HFQ"/>
    <property type="match status" value="1"/>
</dbReference>
<dbReference type="Pfam" id="PF17209">
    <property type="entry name" value="Hfq"/>
    <property type="match status" value="1"/>
</dbReference>
<dbReference type="SUPFAM" id="SSF50182">
    <property type="entry name" value="Sm-like ribonucleoproteins"/>
    <property type="match status" value="1"/>
</dbReference>
<dbReference type="PROSITE" id="PS52002">
    <property type="entry name" value="SM"/>
    <property type="match status" value="1"/>
</dbReference>
<keyword id="KW-0694">RNA-binding</keyword>
<keyword id="KW-0346">Stress response</keyword>
<gene>
    <name evidence="1" type="primary">hfq</name>
    <name type="ordered locus">Moth_1116</name>
</gene>
<sequence>MNKTQGNLQDLFLNVLRRDNTPVTIYLVNGFQLKGVVRGFDNFTVVLDADGKQQMIYKHAISTIMPFRPVNLMAESRAQAEAKQ</sequence>
<name>HFQ_MOOTA</name>
<comment type="function">
    <text evidence="1">RNA chaperone that binds small regulatory RNA (sRNAs) and mRNAs to facilitate mRNA translational regulation in response to envelope stress, environmental stress and changes in metabolite concentrations. Also binds with high specificity to tRNAs.</text>
</comment>
<comment type="subunit">
    <text evidence="1">Homohexamer.</text>
</comment>
<comment type="similarity">
    <text evidence="1">Belongs to the Hfq family.</text>
</comment>
<proteinExistence type="inferred from homology"/>
<organism>
    <name type="scientific">Moorella thermoacetica (strain ATCC 39073 / JCM 9320)</name>
    <dbReference type="NCBI Taxonomy" id="264732"/>
    <lineage>
        <taxon>Bacteria</taxon>
        <taxon>Bacillati</taxon>
        <taxon>Bacillota</taxon>
        <taxon>Clostridia</taxon>
        <taxon>Moorellales</taxon>
        <taxon>Moorellaceae</taxon>
        <taxon>Moorella</taxon>
    </lineage>
</organism>
<evidence type="ECO:0000255" key="1">
    <source>
        <dbReference type="HAMAP-Rule" id="MF_00436"/>
    </source>
</evidence>
<evidence type="ECO:0000255" key="2">
    <source>
        <dbReference type="PROSITE-ProRule" id="PRU01346"/>
    </source>
</evidence>